<proteinExistence type="inferred from homology"/>
<evidence type="ECO:0000255" key="1">
    <source>
        <dbReference type="HAMAP-Rule" id="MF_01416"/>
    </source>
</evidence>
<gene>
    <name evidence="1" type="primary">atpH</name>
    <name type="ordered locus">BCE_5433</name>
</gene>
<name>ATPD_BACC1</name>
<accession>Q72XE5</accession>
<feature type="chain" id="PRO_0000370887" description="ATP synthase subunit delta">
    <location>
        <begin position="1"/>
        <end position="180"/>
    </location>
</feature>
<comment type="function">
    <text evidence="1">F(1)F(0) ATP synthase produces ATP from ADP in the presence of a proton or sodium gradient. F-type ATPases consist of two structural domains, F(1) containing the extramembraneous catalytic core and F(0) containing the membrane proton channel, linked together by a central stalk and a peripheral stalk. During catalysis, ATP synthesis in the catalytic domain of F(1) is coupled via a rotary mechanism of the central stalk subunits to proton translocation.</text>
</comment>
<comment type="function">
    <text evidence="1">This protein is part of the stalk that links CF(0) to CF(1). It either transmits conformational changes from CF(0) to CF(1) or is implicated in proton conduction.</text>
</comment>
<comment type="subunit">
    <text evidence="1">F-type ATPases have 2 components, F(1) - the catalytic core - and F(0) - the membrane proton channel. F(1) has five subunits: alpha(3), beta(3), gamma(1), delta(1), epsilon(1). F(0) has three main subunits: a(1), b(2) and c(10-14). The alpha and beta chains form an alternating ring which encloses part of the gamma chain. F(1) is attached to F(0) by a central stalk formed by the gamma and epsilon chains, while a peripheral stalk is formed by the delta and b chains.</text>
</comment>
<comment type="subcellular location">
    <subcellularLocation>
        <location evidence="1">Cell membrane</location>
        <topology evidence="1">Peripheral membrane protein</topology>
    </subcellularLocation>
</comment>
<comment type="similarity">
    <text evidence="1">Belongs to the ATPase delta chain family.</text>
</comment>
<keyword id="KW-0066">ATP synthesis</keyword>
<keyword id="KW-1003">Cell membrane</keyword>
<keyword id="KW-0139">CF(1)</keyword>
<keyword id="KW-0375">Hydrogen ion transport</keyword>
<keyword id="KW-0406">Ion transport</keyword>
<keyword id="KW-0472">Membrane</keyword>
<keyword id="KW-0813">Transport</keyword>
<dbReference type="EMBL" id="AE017194">
    <property type="protein sequence ID" value="AAS44333.1"/>
    <property type="molecule type" value="Genomic_DNA"/>
</dbReference>
<dbReference type="SMR" id="Q72XE5"/>
<dbReference type="KEGG" id="bca:BCE_5433"/>
<dbReference type="HOGENOM" id="CLU_085114_4_1_9"/>
<dbReference type="Proteomes" id="UP000002527">
    <property type="component" value="Chromosome"/>
</dbReference>
<dbReference type="GO" id="GO:0005886">
    <property type="term" value="C:plasma membrane"/>
    <property type="evidence" value="ECO:0007669"/>
    <property type="project" value="UniProtKB-SubCell"/>
</dbReference>
<dbReference type="GO" id="GO:0045259">
    <property type="term" value="C:proton-transporting ATP synthase complex"/>
    <property type="evidence" value="ECO:0007669"/>
    <property type="project" value="UniProtKB-KW"/>
</dbReference>
<dbReference type="GO" id="GO:0046933">
    <property type="term" value="F:proton-transporting ATP synthase activity, rotational mechanism"/>
    <property type="evidence" value="ECO:0007669"/>
    <property type="project" value="UniProtKB-UniRule"/>
</dbReference>
<dbReference type="Gene3D" id="1.10.520.20">
    <property type="entry name" value="N-terminal domain of the delta subunit of the F1F0-ATP synthase"/>
    <property type="match status" value="1"/>
</dbReference>
<dbReference type="HAMAP" id="MF_01416">
    <property type="entry name" value="ATP_synth_delta_bact"/>
    <property type="match status" value="1"/>
</dbReference>
<dbReference type="InterPro" id="IPR026015">
    <property type="entry name" value="ATP_synth_OSCP/delta_N_sf"/>
</dbReference>
<dbReference type="InterPro" id="IPR020781">
    <property type="entry name" value="ATPase_OSCP/d_CS"/>
</dbReference>
<dbReference type="InterPro" id="IPR000711">
    <property type="entry name" value="ATPase_OSCP/dsu"/>
</dbReference>
<dbReference type="NCBIfam" id="TIGR01145">
    <property type="entry name" value="ATP_synt_delta"/>
    <property type="match status" value="1"/>
</dbReference>
<dbReference type="NCBIfam" id="NF004402">
    <property type="entry name" value="PRK05758.2-2"/>
    <property type="match status" value="1"/>
</dbReference>
<dbReference type="NCBIfam" id="NF004403">
    <property type="entry name" value="PRK05758.2-4"/>
    <property type="match status" value="1"/>
</dbReference>
<dbReference type="PANTHER" id="PTHR11910">
    <property type="entry name" value="ATP SYNTHASE DELTA CHAIN"/>
    <property type="match status" value="1"/>
</dbReference>
<dbReference type="Pfam" id="PF00213">
    <property type="entry name" value="OSCP"/>
    <property type="match status" value="1"/>
</dbReference>
<dbReference type="PRINTS" id="PR00125">
    <property type="entry name" value="ATPASEDELTA"/>
</dbReference>
<dbReference type="SUPFAM" id="SSF47928">
    <property type="entry name" value="N-terminal domain of the delta subunit of the F1F0-ATP synthase"/>
    <property type="match status" value="1"/>
</dbReference>
<dbReference type="PROSITE" id="PS00389">
    <property type="entry name" value="ATPASE_DELTA"/>
    <property type="match status" value="1"/>
</dbReference>
<sequence length="180" mass="20482">MSNGIVAKRYAVALFKIAKEKHVLEMFEEELRLVQNVYVKNGELHSFLTQPNISKEQKKTFLANVFGSVSESILNTLYILIDNKRIDILPEIADEYVVLANEERNVADATVYSTRLLSEEEKLNIAEAFAKRTGKDAIRVKNVVDEDLLGGIKVRIGNRIYDGSLQGKLARIQRELMKNR</sequence>
<organism>
    <name type="scientific">Bacillus cereus (strain ATCC 10987 / NRS 248)</name>
    <dbReference type="NCBI Taxonomy" id="222523"/>
    <lineage>
        <taxon>Bacteria</taxon>
        <taxon>Bacillati</taxon>
        <taxon>Bacillota</taxon>
        <taxon>Bacilli</taxon>
        <taxon>Bacillales</taxon>
        <taxon>Bacillaceae</taxon>
        <taxon>Bacillus</taxon>
        <taxon>Bacillus cereus group</taxon>
    </lineage>
</organism>
<reference key="1">
    <citation type="journal article" date="2004" name="Nucleic Acids Res.">
        <title>The genome sequence of Bacillus cereus ATCC 10987 reveals metabolic adaptations and a large plasmid related to Bacillus anthracis pXO1.</title>
        <authorList>
            <person name="Rasko D.A."/>
            <person name="Ravel J."/>
            <person name="Oekstad O.A."/>
            <person name="Helgason E."/>
            <person name="Cer R.Z."/>
            <person name="Jiang L."/>
            <person name="Shores K.A."/>
            <person name="Fouts D.E."/>
            <person name="Tourasse N.J."/>
            <person name="Angiuoli S.V."/>
            <person name="Kolonay J.F."/>
            <person name="Nelson W.C."/>
            <person name="Kolstoe A.-B."/>
            <person name="Fraser C.M."/>
            <person name="Read T.D."/>
        </authorList>
    </citation>
    <scope>NUCLEOTIDE SEQUENCE [LARGE SCALE GENOMIC DNA]</scope>
    <source>
        <strain>ATCC 10987 / NRS 248</strain>
    </source>
</reference>
<protein>
    <recommendedName>
        <fullName evidence="1">ATP synthase subunit delta</fullName>
    </recommendedName>
    <alternativeName>
        <fullName evidence="1">ATP synthase F(1) sector subunit delta</fullName>
    </alternativeName>
    <alternativeName>
        <fullName evidence="1">F-type ATPase subunit delta</fullName>
        <shortName evidence="1">F-ATPase subunit delta</shortName>
    </alternativeName>
</protein>